<protein>
    <recommendedName>
        <fullName evidence="1">Putative glutamate--cysteine ligase 2</fullName>
        <ecNumber evidence="1">6.3.2.2</ecNumber>
    </recommendedName>
    <alternativeName>
        <fullName evidence="1">Gamma-glutamylcysteine synthetase 2</fullName>
        <shortName evidence="1">GCS 2</shortName>
        <shortName evidence="1">Gamma-GCS 2</shortName>
    </alternativeName>
</protein>
<dbReference type="EC" id="6.3.2.2" evidence="1"/>
<dbReference type="EMBL" id="CP001364">
    <property type="protein sequence ID" value="ACM55228.1"/>
    <property type="molecule type" value="Genomic_DNA"/>
</dbReference>
<dbReference type="SMR" id="B9LEN6"/>
<dbReference type="KEGG" id="chl:Chy400_3862"/>
<dbReference type="HOGENOM" id="CLU_044848_1_0_0"/>
<dbReference type="OrthoDB" id="9769628at2"/>
<dbReference type="GO" id="GO:0005524">
    <property type="term" value="F:ATP binding"/>
    <property type="evidence" value="ECO:0007669"/>
    <property type="project" value="UniProtKB-KW"/>
</dbReference>
<dbReference type="GO" id="GO:0004357">
    <property type="term" value="F:glutamate-cysteine ligase activity"/>
    <property type="evidence" value="ECO:0007669"/>
    <property type="project" value="UniProtKB-EC"/>
</dbReference>
<dbReference type="GO" id="GO:0042398">
    <property type="term" value="P:modified amino acid biosynthetic process"/>
    <property type="evidence" value="ECO:0007669"/>
    <property type="project" value="InterPro"/>
</dbReference>
<dbReference type="FunFam" id="3.30.590.20:FF:000012">
    <property type="entry name" value="Putative glutamate--cysteine ligase 2"/>
    <property type="match status" value="1"/>
</dbReference>
<dbReference type="Gene3D" id="3.30.590.20">
    <property type="match status" value="1"/>
</dbReference>
<dbReference type="HAMAP" id="MF_01609">
    <property type="entry name" value="Glu_cys_ligase_2"/>
    <property type="match status" value="1"/>
</dbReference>
<dbReference type="InterPro" id="IPR050141">
    <property type="entry name" value="GCL_type2/YbdK_subfam"/>
</dbReference>
<dbReference type="InterPro" id="IPR006336">
    <property type="entry name" value="GCS2"/>
</dbReference>
<dbReference type="InterPro" id="IPR014746">
    <property type="entry name" value="Gln_synth/guanido_kin_cat_dom"/>
</dbReference>
<dbReference type="InterPro" id="IPR011793">
    <property type="entry name" value="YbdK"/>
</dbReference>
<dbReference type="NCBIfam" id="TIGR02050">
    <property type="entry name" value="gshA_cyan_rel"/>
    <property type="match status" value="1"/>
</dbReference>
<dbReference type="NCBIfam" id="NF010039">
    <property type="entry name" value="PRK13515.1"/>
    <property type="match status" value="1"/>
</dbReference>
<dbReference type="PANTHER" id="PTHR36510">
    <property type="entry name" value="GLUTAMATE--CYSTEINE LIGASE 2-RELATED"/>
    <property type="match status" value="1"/>
</dbReference>
<dbReference type="PANTHER" id="PTHR36510:SF1">
    <property type="entry name" value="GLUTAMATE--CYSTEINE LIGASE 2-RELATED"/>
    <property type="match status" value="1"/>
</dbReference>
<dbReference type="Pfam" id="PF04107">
    <property type="entry name" value="GCS2"/>
    <property type="match status" value="1"/>
</dbReference>
<dbReference type="SUPFAM" id="SSF55931">
    <property type="entry name" value="Glutamine synthetase/guanido kinase"/>
    <property type="match status" value="1"/>
</dbReference>
<accession>B9LEN6</accession>
<keyword id="KW-0067">ATP-binding</keyword>
<keyword id="KW-0436">Ligase</keyword>
<keyword id="KW-0547">Nucleotide-binding</keyword>
<evidence type="ECO:0000255" key="1">
    <source>
        <dbReference type="HAMAP-Rule" id="MF_01609"/>
    </source>
</evidence>
<reference key="1">
    <citation type="submission" date="2009-01" db="EMBL/GenBank/DDBJ databases">
        <title>Complete sequence of Chloroflexus sp. Y-400-fl.</title>
        <authorList>
            <consortium name="US DOE Joint Genome Institute"/>
            <person name="Lucas S."/>
            <person name="Copeland A."/>
            <person name="Lapidus A."/>
            <person name="Glavina del Rio T."/>
            <person name="Dalin E."/>
            <person name="Tice H."/>
            <person name="Bruce D."/>
            <person name="Goodwin L."/>
            <person name="Pitluck S."/>
            <person name="Sims D."/>
            <person name="Kiss H."/>
            <person name="Brettin T."/>
            <person name="Detter J.C."/>
            <person name="Han C."/>
            <person name="Larimer F."/>
            <person name="Land M."/>
            <person name="Hauser L."/>
            <person name="Kyrpides N."/>
            <person name="Ovchinnikova G."/>
            <person name="Bryant D.A."/>
            <person name="Richardson P."/>
        </authorList>
    </citation>
    <scope>NUCLEOTIDE SEQUENCE [LARGE SCALE GENOMIC DNA]</scope>
    <source>
        <strain>ATCC 29364 / DSM 637 / Y-400-fl</strain>
    </source>
</reference>
<proteinExistence type="inferred from homology"/>
<sequence>MSVYNPNDADFAFTLGIEEEYQIVDPETRELRSYITQILEPGRTILREQIKPEMHQSIVEVGTRPCRTISEARAEIVRLRSAIAGLAARHNLRIVAAGTHPFSSWMQQEITPDERYHMVVGEMQDAALQLLIFGMHCHIGMPNNEVAIELMNVARYICPHLLALSTSSPFWMGRNTGFKSYRSVIFSTFPRTGIPPTFHSASEFERYVQLLVNTGCIDNGKKIWWDLRPHPFFGTLEFRVCDIATKVEECLALAATMQALIVKFYTMFEENTTFRVYRRALINENKWRAQRWGLDGKLIDFGKRKEVEAKALVHEIVELVDDVVDMLGSRREVEYLLKIVENGTSADRQLRVFAETNDLKAVVDNLMVETMEGVPAMAFEADVQSQAAHS</sequence>
<gene>
    <name type="ordered locus">Chy400_3862</name>
</gene>
<comment type="function">
    <text evidence="1">ATP-dependent carboxylate-amine ligase which exhibits weak glutamate--cysteine ligase activity.</text>
</comment>
<comment type="catalytic activity">
    <reaction evidence="1">
        <text>L-cysteine + L-glutamate + ATP = gamma-L-glutamyl-L-cysteine + ADP + phosphate + H(+)</text>
        <dbReference type="Rhea" id="RHEA:13285"/>
        <dbReference type="ChEBI" id="CHEBI:15378"/>
        <dbReference type="ChEBI" id="CHEBI:29985"/>
        <dbReference type="ChEBI" id="CHEBI:30616"/>
        <dbReference type="ChEBI" id="CHEBI:35235"/>
        <dbReference type="ChEBI" id="CHEBI:43474"/>
        <dbReference type="ChEBI" id="CHEBI:58173"/>
        <dbReference type="ChEBI" id="CHEBI:456216"/>
        <dbReference type="EC" id="6.3.2.2"/>
    </reaction>
</comment>
<comment type="similarity">
    <text evidence="1">Belongs to the glutamate--cysteine ligase type 2 family. YbdK subfamily.</text>
</comment>
<feature type="chain" id="PRO_1000185845" description="Putative glutamate--cysteine ligase 2">
    <location>
        <begin position="1"/>
        <end position="390"/>
    </location>
</feature>
<name>GCS2_CHLSY</name>
<organism>
    <name type="scientific">Chloroflexus aurantiacus (strain ATCC 29364 / DSM 637 / Y-400-fl)</name>
    <dbReference type="NCBI Taxonomy" id="480224"/>
    <lineage>
        <taxon>Bacteria</taxon>
        <taxon>Bacillati</taxon>
        <taxon>Chloroflexota</taxon>
        <taxon>Chloroflexia</taxon>
        <taxon>Chloroflexales</taxon>
        <taxon>Chloroflexineae</taxon>
        <taxon>Chloroflexaceae</taxon>
        <taxon>Chloroflexus</taxon>
    </lineage>
</organism>